<name>E1A_ADEC2</name>
<organismHost>
    <name type="scientific">Canis lupus familiaris</name>
    <name type="common">Dog</name>
    <name type="synonym">Canis familiaris</name>
    <dbReference type="NCBI Taxonomy" id="9615"/>
</organismHost>
<keyword id="KW-0010">Activator</keyword>
<keyword id="KW-0244">Early protein</keyword>
<keyword id="KW-1078">G1/S host cell cycle checkpoint dysregulation by virus</keyword>
<keyword id="KW-1048">Host nucleus</keyword>
<keyword id="KW-0945">Host-virus interaction</keyword>
<keyword id="KW-1090">Inhibition of host innate immune response by virus</keyword>
<keyword id="KW-1114">Inhibition of host interferon signaling pathway by virus</keyword>
<keyword id="KW-1105">Inhibition of host STAT1 by virus</keyword>
<keyword id="KW-0922">Interferon antiviral system evasion</keyword>
<keyword id="KW-0479">Metal-binding</keyword>
<keyword id="KW-1121">Modulation of host cell cycle by virus</keyword>
<keyword id="KW-0804">Transcription</keyword>
<keyword id="KW-0805">Transcription regulation</keyword>
<keyword id="KW-0899">Viral immunoevasion</keyword>
<keyword id="KW-0862">Zinc</keyword>
<keyword id="KW-0863">Zinc-finger</keyword>
<organism>
    <name type="scientific">Canine adenovirus serotype 2</name>
    <name type="common">CAdV-2</name>
    <name type="synonym">Canine adenovirus 2</name>
    <dbReference type="NCBI Taxonomy" id="10514"/>
    <lineage>
        <taxon>Viruses</taxon>
        <taxon>Varidnaviria</taxon>
        <taxon>Bamfordvirae</taxon>
        <taxon>Preplasmiviricota</taxon>
        <taxon>Tectiliviricetes</taxon>
        <taxon>Rowavirales</taxon>
        <taxon>Adenoviridae</taxon>
        <taxon>Mastadenovirus</taxon>
        <taxon>Canine mastadenovirus A</taxon>
    </lineage>
</organism>
<comment type="function">
    <text evidence="3">Plays a role in viral genome replication by driving entry of quiescent cells into the cell cycle. Stimulation of progression from G1 to S phase allows the virus to efficiently use the cellular DNA replicating machinery to achieve viral genome replication. E1A protein has both transforming and trans-activating activities. Induces the disassembly of the E2F1 transcription factor from RB1 by direct competition for the same binding site on RB1, with subsequent transcriptional activation of E2F1-regulated S-phase genes and of the E2 region of the adenoviral genome. Release of E2F1 leads to the ARF-mediated inhibition of MDM2 and causes TP53/p53 to accumulate because it is not targeted for degradation by MDM2-mediated ubiquitination anymore. This increase in TP53, in turn, would arrest the cell proliferation and direct its death but this effect is counteracted by the viral protein E1B-55K. Inactivation of the ability of RB1 to arrest the cell cycle is critical for cellular transformation, uncontrolled cellular growth and proliferation induced by viral infection. Interaction with RBX1 and CUL1 inhibits ubiquitination of the proteins targeted by SCF(FBXW7) ubiquitin ligase complex, and may be linked to unregulated host cell proliferation. The tumorigenesis-restraining activity of E1A may be related to the disruption of the host CtBP-CtIP complex through the CtBP binding motif.</text>
</comment>
<comment type="subunit">
    <text evidence="2 3">Interacts with host UBE2I; this interaction interferes with polySUMOylation. Interacts with host RB1; this interaction induces the aberrant dissociation of RB1-E2F1 complex thereby disrupting the activity of RB1 and activating E2F1-regulated genes. Interacts with host ATF7; the interaction enhances ATF7-mediated viral transactivation activity which requires the zinc binding domains of both proteins. Isoform early E1A 32 kDa protein and isoform early E1A 26 kDa protein interact (via N-terminus) with CUL1 and E3 ubiquitin ligase RBX1; these interactions inhibit RBX1-CUL1-dependent elongation reaction of ubiquitin chains and attenuate ubiquitination of SCF(FBXW7) target proteins. Interacts (via PXLXP motif) with host ZMYND11/BS69 (via MYND-type zinc finger); this interaction inhibits E1A mediated transactivation. Interacts with host EP300; this interaction stimulates the acetylation of RB1 by recruiting EP300 and RB1 into a multimeric-protein complex. Interacts with host CTBP1 and CTBP2; this interaction seems to potentiate viral replication. Interacts with host DCAF7. Interacts with host DYRK1A. Interacts with host KPNA4; this interaction allows E1A import into the host nucleus. Interacts with host EP400; this interaction stabilizes MYC. Interacts with host TBP protein; this interaction probably disrupts the TBP-TATA complex.</text>
</comment>
<comment type="subcellular location">
    <subcellularLocation>
        <location evidence="3">Host nucleus</location>
    </subcellularLocation>
</comment>
<comment type="similarity">
    <text evidence="6">Belongs to the adenoviridae E1A protein family.</text>
</comment>
<feature type="chain" id="PRO_0000221703" description="Early E1A protein">
    <location>
        <begin position="1"/>
        <end position="171"/>
    </location>
</feature>
<feature type="zinc finger region" evidence="2">
    <location>
        <begin position="145"/>
        <end position="163"/>
    </location>
</feature>
<feature type="region of interest" description="Interaction with RB1 in competition with E2F1" evidence="1">
    <location>
        <begin position="40"/>
        <end position="48"/>
    </location>
</feature>
<feature type="region of interest" description="Disordered" evidence="5">
    <location>
        <begin position="67"/>
        <end position="96"/>
    </location>
</feature>
<feature type="short sequence motif" description="LXCXE motif, interaction with host RB1" evidence="4">
    <location>
        <begin position="106"/>
        <end position="110"/>
    </location>
</feature>
<feature type="short sequence motif" description="Nuclear localization signal" evidence="4">
    <location>
        <begin position="166"/>
        <end position="171"/>
    </location>
</feature>
<feature type="compositionally biased region" description="Pro residues" evidence="5">
    <location>
        <begin position="84"/>
        <end position="96"/>
    </location>
</feature>
<sequence>MKYTIVPAPRNLHDYVLELLEEWHPDCLDCEYPNGSPSPPTLHDLFDVELETSHPFVGLCDSCAEADTDSSASTEGDSGFSPLSTPPVSPIPPHPTSPASISDDMLLCLEEMPTFDDEDEVRSAATTFERWENTFDPHVGPIFGCLRCAFYQEQDDNALCGLCYPKGPCRR</sequence>
<protein>
    <recommendedName>
        <fullName>Early E1A protein</fullName>
    </recommendedName>
    <alternativeName>
        <fullName>Early E1A 20 kDa protein</fullName>
    </alternativeName>
</protein>
<reference key="1">
    <citation type="journal article" date="1989" name="Virus Res.">
        <title>Identification and nucleotide sequence of the early region 1 from canine adenovirus types 1 and 2.</title>
        <authorList>
            <person name="Spibey N."/>
            <person name="McClory R.S."/>
            <person name="Cavanagh H.M.A."/>
        </authorList>
    </citation>
    <scope>NUCLEOTIDE SEQUENCE [GENOMIC DNA]</scope>
</reference>
<dbReference type="PIR" id="B60010">
    <property type="entry name" value="B60010"/>
</dbReference>
<dbReference type="GO" id="GO:0042025">
    <property type="term" value="C:host cell nucleus"/>
    <property type="evidence" value="ECO:0007669"/>
    <property type="project" value="UniProtKB-SubCell"/>
</dbReference>
<dbReference type="GO" id="GO:0008270">
    <property type="term" value="F:zinc ion binding"/>
    <property type="evidence" value="ECO:0007669"/>
    <property type="project" value="UniProtKB-KW"/>
</dbReference>
<dbReference type="GO" id="GO:0006355">
    <property type="term" value="P:regulation of DNA-templated transcription"/>
    <property type="evidence" value="ECO:0007669"/>
    <property type="project" value="InterPro"/>
</dbReference>
<dbReference type="GO" id="GO:0039645">
    <property type="term" value="P:symbiont-mediated perturbation of host cell cycle G1/S transition checkpoint"/>
    <property type="evidence" value="ECO:0007669"/>
    <property type="project" value="UniProtKB-KW"/>
</dbReference>
<dbReference type="GO" id="GO:0052170">
    <property type="term" value="P:symbiont-mediated suppression of host innate immune response"/>
    <property type="evidence" value="ECO:0007669"/>
    <property type="project" value="UniProtKB-KW"/>
</dbReference>
<dbReference type="GO" id="GO:0039563">
    <property type="term" value="P:symbiont-mediated suppression of host JAK-STAT cascade via inhibition of STAT1 activity"/>
    <property type="evidence" value="ECO:0007669"/>
    <property type="project" value="UniProtKB-KW"/>
</dbReference>
<dbReference type="GO" id="GO:0039502">
    <property type="term" value="P:symbiont-mediated suppression of host type I interferon-mediated signaling pathway"/>
    <property type="evidence" value="ECO:0007669"/>
    <property type="project" value="UniProtKB-KW"/>
</dbReference>
<dbReference type="InterPro" id="IPR014410">
    <property type="entry name" value="Aden_E1A"/>
</dbReference>
<dbReference type="PIRSF" id="PIRSF003669">
    <property type="entry name" value="Aden_E1A"/>
    <property type="match status" value="1"/>
</dbReference>
<evidence type="ECO:0000250" key="1"/>
<evidence type="ECO:0000250" key="2">
    <source>
        <dbReference type="UniProtKB" id="P03254"/>
    </source>
</evidence>
<evidence type="ECO:0000250" key="3">
    <source>
        <dbReference type="UniProtKB" id="P03255"/>
    </source>
</evidence>
<evidence type="ECO:0000255" key="4"/>
<evidence type="ECO:0000256" key="5">
    <source>
        <dbReference type="SAM" id="MobiDB-lite"/>
    </source>
</evidence>
<evidence type="ECO:0000305" key="6"/>
<proteinExistence type="inferred from homology"/>
<accession>P35981</accession>